<evidence type="ECO:0000250" key="1"/>
<evidence type="ECO:0000250" key="2">
    <source>
        <dbReference type="UniProtKB" id="Q9UBW5"/>
    </source>
</evidence>
<evidence type="ECO:0000255" key="3">
    <source>
        <dbReference type="PROSITE-ProRule" id="PRU00361"/>
    </source>
</evidence>
<evidence type="ECO:0000256" key="4">
    <source>
        <dbReference type="SAM" id="MobiDB-lite"/>
    </source>
</evidence>
<evidence type="ECO:0000269" key="5">
    <source>
    </source>
</evidence>
<evidence type="ECO:0007744" key="6">
    <source>
    </source>
</evidence>
<evidence type="ECO:0007744" key="7">
    <source>
    </source>
</evidence>
<feature type="chain" id="PRO_0000416099" description="Bridging integrator 2">
    <location>
        <begin position="1"/>
        <end position="489"/>
    </location>
</feature>
<feature type="domain" description="BAR" evidence="3">
    <location>
        <begin position="28"/>
        <end position="244"/>
    </location>
</feature>
<feature type="region of interest" description="Disordered" evidence="4">
    <location>
        <begin position="267"/>
        <end position="489"/>
    </location>
</feature>
<feature type="compositionally biased region" description="Low complexity" evidence="4">
    <location>
        <begin position="267"/>
        <end position="302"/>
    </location>
</feature>
<feature type="compositionally biased region" description="Acidic residues" evidence="4">
    <location>
        <begin position="311"/>
        <end position="331"/>
    </location>
</feature>
<feature type="compositionally biased region" description="Low complexity" evidence="4">
    <location>
        <begin position="358"/>
        <end position="368"/>
    </location>
</feature>
<feature type="modified residue" description="Phosphoserine" evidence="2">
    <location>
        <position position="273"/>
    </location>
</feature>
<feature type="modified residue" description="Phosphoserine" evidence="2">
    <location>
        <position position="357"/>
    </location>
</feature>
<feature type="modified residue" description="Phosphoserine" evidence="7">
    <location>
        <position position="380"/>
    </location>
</feature>
<feature type="modified residue" description="Phosphoserine" evidence="2">
    <location>
        <position position="392"/>
    </location>
</feature>
<feature type="modified residue" description="Phosphoserine" evidence="7">
    <location>
        <position position="420"/>
    </location>
</feature>
<feature type="modified residue" description="Phosphoserine" evidence="7">
    <location>
        <position position="422"/>
    </location>
</feature>
<feature type="modified residue" description="Phosphoserine" evidence="7">
    <location>
        <position position="424"/>
    </location>
</feature>
<feature type="modified residue" description="Phosphoserine" evidence="7">
    <location>
        <position position="430"/>
    </location>
</feature>
<feature type="modified residue" description="Phosphoserine" evidence="7">
    <location>
        <position position="435"/>
    </location>
</feature>
<feature type="modified residue" description="Phosphoserine" evidence="6 7">
    <location>
        <position position="439"/>
    </location>
</feature>
<feature type="modified residue" description="Phosphoserine" evidence="7">
    <location>
        <position position="443"/>
    </location>
</feature>
<comment type="function">
    <text evidence="1 5">Promotes cell motility and migration, probably via its interaction with the cell membrane and with podosome proteins that mediate interaction with the cytoskeleton. Modulates membrane curvature and mediates membrane tubulation. Inhibits phagocytosis (By similarity). Plays a role in podosome formation.</text>
</comment>
<comment type="subunit">
    <text evidence="1">Homodimer. Interacts with BIN1. Interacts with ARHGEF6 (via SH3 domain), ARHGEF7 (via SH3 domain), SH3GL1, SH3GL2 and SH3GL3. Identified in a complex with ARHGEF6 and GIT2 (By similarity).</text>
</comment>
<comment type="subcellular location">
    <subcellularLocation>
        <location evidence="2">Cytoplasm</location>
    </subcellularLocation>
    <subcellularLocation>
        <location evidence="5">Cell projection</location>
        <location evidence="5">Podosome membrane</location>
        <topology evidence="5">Peripheral membrane protein</topology>
        <orientation evidence="5">Cytoplasmic side</orientation>
    </subcellularLocation>
    <subcellularLocation>
        <location evidence="2">Cytoplasm</location>
        <location evidence="2">Cell cortex</location>
    </subcellularLocation>
    <subcellularLocation>
        <location evidence="2">Cell projection</location>
        <location evidence="2">Phagocytic cup</location>
    </subcellularLocation>
    <text evidence="2">Associates with membranes enriched in phosphoinositides. Detected in the actin-rich cell cortex at the leading edge of migrating cells. Detected at podosomes, at an actin-rich ring-like structure.</text>
</comment>
<comment type="domain">
    <text evidence="1">The BAR domain mediates dimerization and interaction with membranes enriched in phosphatidylinositides.</text>
</comment>
<protein>
    <recommendedName>
        <fullName>Bridging integrator 2</fullName>
    </recommendedName>
</protein>
<accession>D3Z6Q9</accession>
<proteinExistence type="evidence at protein level"/>
<keyword id="KW-0965">Cell junction</keyword>
<keyword id="KW-1003">Cell membrane</keyword>
<keyword id="KW-0966">Cell projection</keyword>
<keyword id="KW-0963">Cytoplasm</keyword>
<keyword id="KW-0472">Membrane</keyword>
<keyword id="KW-0597">Phosphoprotein</keyword>
<keyword id="KW-1185">Reference proteome</keyword>
<gene>
    <name type="primary">Bin2</name>
</gene>
<reference key="1">
    <citation type="journal article" date="2009" name="PLoS Biol.">
        <title>Lineage-specific biology revealed by a finished genome assembly of the mouse.</title>
        <authorList>
            <person name="Church D.M."/>
            <person name="Goodstadt L."/>
            <person name="Hillier L.W."/>
            <person name="Zody M.C."/>
            <person name="Goldstein S."/>
            <person name="She X."/>
            <person name="Bult C.J."/>
            <person name="Agarwala R."/>
            <person name="Cherry J.L."/>
            <person name="DiCuccio M."/>
            <person name="Hlavina W."/>
            <person name="Kapustin Y."/>
            <person name="Meric P."/>
            <person name="Maglott D."/>
            <person name="Birtle Z."/>
            <person name="Marques A.C."/>
            <person name="Graves T."/>
            <person name="Zhou S."/>
            <person name="Teague B."/>
            <person name="Potamousis K."/>
            <person name="Churas C."/>
            <person name="Place M."/>
            <person name="Herschleb J."/>
            <person name="Runnheim R."/>
            <person name="Forrest D."/>
            <person name="Amos-Landgraf J."/>
            <person name="Schwartz D.C."/>
            <person name="Cheng Z."/>
            <person name="Lindblad-Toh K."/>
            <person name="Eichler E.E."/>
            <person name="Ponting C.P."/>
        </authorList>
    </citation>
    <scope>NUCLEOTIDE SEQUENCE [LARGE SCALE GENOMIC DNA]</scope>
    <source>
        <strain>C57BL/6J</strain>
    </source>
</reference>
<reference key="2">
    <citation type="journal article" date="2007" name="Proc. Natl. Acad. Sci. U.S.A.">
        <title>Large-scale phosphorylation analysis of mouse liver.</title>
        <authorList>
            <person name="Villen J."/>
            <person name="Beausoleil S.A."/>
            <person name="Gerber S.A."/>
            <person name="Gygi S.P."/>
        </authorList>
    </citation>
    <scope>PHOSPHORYLATION [LARGE SCALE ANALYSIS] AT SER-439</scope>
    <scope>IDENTIFICATION BY MASS SPECTROMETRY [LARGE SCALE ANALYSIS]</scope>
    <source>
        <tissue>Liver</tissue>
    </source>
</reference>
<reference key="3">
    <citation type="journal article" date="2010" name="Cell">
        <title>A tissue-specific atlas of mouse protein phosphorylation and expression.</title>
        <authorList>
            <person name="Huttlin E.L."/>
            <person name="Jedrychowski M.P."/>
            <person name="Elias J.E."/>
            <person name="Goswami T."/>
            <person name="Rad R."/>
            <person name="Beausoleil S.A."/>
            <person name="Villen J."/>
            <person name="Haas W."/>
            <person name="Sowa M.E."/>
            <person name="Gygi S.P."/>
        </authorList>
    </citation>
    <scope>PHOSPHORYLATION [LARGE SCALE ANALYSIS] AT SER-380; SER-420; SER-422; SER-424; SER-430; SER-435; SER-439 AND SER-443</scope>
    <scope>IDENTIFICATION BY MASS SPECTROMETRY [LARGE SCALE ANALYSIS]</scope>
    <source>
        <tissue>Brain</tissue>
        <tissue>Heart</tissue>
        <tissue>Liver</tissue>
        <tissue>Lung</tissue>
        <tissue>Spleen</tissue>
        <tissue>Testis</tissue>
    </source>
</reference>
<reference key="4">
    <citation type="journal article" date="2012" name="PLoS ONE">
        <title>Bin2 is a membrane sculpting N-BAR protein that influences leucocyte podosomes, motility and phagocytosis.</title>
        <authorList>
            <person name="Sanchez-Barrena M.J."/>
            <person name="Vallis Y."/>
            <person name="Clatworthy M.R."/>
            <person name="Doherty G.J."/>
            <person name="Veprintsev D.B."/>
            <person name="Evans P.R."/>
            <person name="McMahon H.T."/>
        </authorList>
    </citation>
    <scope>FUNCTION</scope>
    <scope>SUBCELLULAR LOCATION</scope>
    <scope>TISSUE SPECIFICITY</scope>
</reference>
<dbReference type="EMBL" id="AC123724">
    <property type="status" value="NOT_ANNOTATED_CDS"/>
    <property type="molecule type" value="Genomic_DNA"/>
</dbReference>
<dbReference type="SMR" id="D3Z6Q9"/>
<dbReference type="FunCoup" id="D3Z6Q9">
    <property type="interactions" value="182"/>
</dbReference>
<dbReference type="IntAct" id="D3Z6Q9">
    <property type="interactions" value="1"/>
</dbReference>
<dbReference type="STRING" id="10090.ENSMUSP00000138523"/>
<dbReference type="GlyGen" id="D3Z6Q9">
    <property type="glycosylation" value="1 site"/>
</dbReference>
<dbReference type="iPTMnet" id="D3Z6Q9"/>
<dbReference type="PhosphoSitePlus" id="D3Z6Q9"/>
<dbReference type="SwissPalm" id="D3Z6Q9"/>
<dbReference type="jPOST" id="D3Z6Q9"/>
<dbReference type="PaxDb" id="10090-ENSMUSP00000138523"/>
<dbReference type="PeptideAtlas" id="D3Z6Q9"/>
<dbReference type="ProteomicsDB" id="273674"/>
<dbReference type="AGR" id="MGI:3611448"/>
<dbReference type="MGI" id="MGI:3611448">
    <property type="gene designation" value="Bin2"/>
</dbReference>
<dbReference type="eggNOG" id="KOG3771">
    <property type="taxonomic scope" value="Eukaryota"/>
</dbReference>
<dbReference type="InParanoid" id="D3Z6Q9"/>
<dbReference type="PhylomeDB" id="D3Z6Q9"/>
<dbReference type="Reactome" id="R-MMU-6798695">
    <property type="pathway name" value="Neutrophil degranulation"/>
</dbReference>
<dbReference type="PRO" id="PR:D3Z6Q9"/>
<dbReference type="Proteomes" id="UP000000589">
    <property type="component" value="Unplaced"/>
</dbReference>
<dbReference type="RNAct" id="D3Z6Q9">
    <property type="molecule type" value="protein"/>
</dbReference>
<dbReference type="GO" id="GO:0070161">
    <property type="term" value="C:anchoring junction"/>
    <property type="evidence" value="ECO:0007669"/>
    <property type="project" value="UniProtKB-KW"/>
</dbReference>
<dbReference type="GO" id="GO:0005938">
    <property type="term" value="C:cell cortex"/>
    <property type="evidence" value="ECO:0007669"/>
    <property type="project" value="UniProtKB-SubCell"/>
</dbReference>
<dbReference type="GO" id="GO:0042995">
    <property type="term" value="C:cell projection"/>
    <property type="evidence" value="ECO:0007669"/>
    <property type="project" value="UniProtKB-SubCell"/>
</dbReference>
<dbReference type="GO" id="GO:0001891">
    <property type="term" value="C:phagocytic cup"/>
    <property type="evidence" value="ECO:0007669"/>
    <property type="project" value="UniProtKB-SubCell"/>
</dbReference>
<dbReference type="GO" id="GO:0002102">
    <property type="term" value="C:podosome"/>
    <property type="evidence" value="ECO:0000250"/>
    <property type="project" value="UniProtKB"/>
</dbReference>
<dbReference type="GO" id="GO:0005543">
    <property type="term" value="F:phospholipid binding"/>
    <property type="evidence" value="ECO:0000250"/>
    <property type="project" value="UniProtKB"/>
</dbReference>
<dbReference type="GO" id="GO:0060326">
    <property type="term" value="P:cell chemotaxis"/>
    <property type="evidence" value="ECO:0000250"/>
    <property type="project" value="UniProtKB"/>
</dbReference>
<dbReference type="GO" id="GO:0097320">
    <property type="term" value="P:plasma membrane tubulation"/>
    <property type="evidence" value="ECO:0000250"/>
    <property type="project" value="UniProtKB"/>
</dbReference>
<dbReference type="GO" id="GO:0071800">
    <property type="term" value="P:podosome assembly"/>
    <property type="evidence" value="ECO:0000250"/>
    <property type="project" value="UniProtKB"/>
</dbReference>
<dbReference type="FunFam" id="1.20.1270.60:FF:000167">
    <property type="entry name" value="Bridging integrator 2"/>
    <property type="match status" value="1"/>
</dbReference>
<dbReference type="Gene3D" id="1.20.1270.60">
    <property type="entry name" value="Arfaptin homology (AH) domain/BAR domain"/>
    <property type="match status" value="1"/>
</dbReference>
<dbReference type="InterPro" id="IPR027267">
    <property type="entry name" value="AH/BAR_dom_sf"/>
</dbReference>
<dbReference type="InterPro" id="IPR003005">
    <property type="entry name" value="Amphiphysin"/>
</dbReference>
<dbReference type="InterPro" id="IPR004148">
    <property type="entry name" value="BAR_dom"/>
</dbReference>
<dbReference type="InterPro" id="IPR048886">
    <property type="entry name" value="Bin2_C"/>
</dbReference>
<dbReference type="PANTHER" id="PTHR46514">
    <property type="entry name" value="AMPHIPHYSIN"/>
    <property type="match status" value="1"/>
</dbReference>
<dbReference type="PANTHER" id="PTHR46514:SF1">
    <property type="entry name" value="BRIDGING INTEGRATOR 2"/>
    <property type="match status" value="1"/>
</dbReference>
<dbReference type="Pfam" id="PF03114">
    <property type="entry name" value="BAR"/>
    <property type="match status" value="1"/>
</dbReference>
<dbReference type="Pfam" id="PF21532">
    <property type="entry name" value="Bin2_C"/>
    <property type="match status" value="1"/>
</dbReference>
<dbReference type="PRINTS" id="PR01251">
    <property type="entry name" value="AMPHIPHYSIN"/>
</dbReference>
<dbReference type="SMART" id="SM00721">
    <property type="entry name" value="BAR"/>
    <property type="match status" value="1"/>
</dbReference>
<dbReference type="SUPFAM" id="SSF103657">
    <property type="entry name" value="BAR/IMD domain-like"/>
    <property type="match status" value="1"/>
</dbReference>
<dbReference type="PROSITE" id="PS51021">
    <property type="entry name" value="BAR"/>
    <property type="match status" value="1"/>
</dbReference>
<organism>
    <name type="scientific">Mus musculus</name>
    <name type="common">Mouse</name>
    <dbReference type="NCBI Taxonomy" id="10090"/>
    <lineage>
        <taxon>Eukaryota</taxon>
        <taxon>Metazoa</taxon>
        <taxon>Chordata</taxon>
        <taxon>Craniata</taxon>
        <taxon>Vertebrata</taxon>
        <taxon>Euteleostomi</taxon>
        <taxon>Mammalia</taxon>
        <taxon>Eutheria</taxon>
        <taxon>Euarchontoglires</taxon>
        <taxon>Glires</taxon>
        <taxon>Rodentia</taxon>
        <taxon>Myomorpha</taxon>
        <taxon>Muroidea</taxon>
        <taxon>Muridae</taxon>
        <taxon>Murinae</taxon>
        <taxon>Mus</taxon>
        <taxon>Mus</taxon>
    </lineage>
</organism>
<sequence length="489" mass="52554">MAEGKAGGAAGLFAKQMQKKFSRAQEKVLQKLGKTVETKDERFEQSASNFYQQQAEGHKLYKDLKNFLSAVKVMHESSKRVSETLQEVYSSDWDGHEDLKAIVGNNDLLWEDYEEKLADQALRTMENYVSQFSEIKERIAKRGRKLVDYDSARHHLEAVQNAKKKDDAKMAKAEEDFSKAQIVFEDLNQELLEELPILYNSRIGCYVTVFQNISNLRDVFYREMSKLNHNLYEVMSKLEKQHSNKVFVVKGLSSSSRRSLVISPPVQSCAASSPVSPVSPVSPVTSPTSPSATSEPESVSATGEELTSEAGGEDSCESQESLKDEEADEAQSETSSSLPACNGPTPAPASPAAEVGSQEEALSSSAQSPGRGQTGKDTPSPGDVVLRARASSEGAEQSKRAASIQRTSAPPSRPPPPRASGSGSCNAPGSPEGSSQLCSPRASPDASSNPEPAETREKEGAGSSGPEEPRAVSTKSATQASGGLVGLFL</sequence>
<name>BIN2_MOUSE</name>